<feature type="chain" id="PRO_0000129378" description="Bifunctional arginine demethylase and lysyl-hydroxylase psr-1">
    <location>
        <begin position="1"/>
        <end position="400"/>
    </location>
</feature>
<feature type="domain" description="JmjC" evidence="2">
    <location>
        <begin position="146"/>
        <end position="310"/>
    </location>
</feature>
<feature type="region of interest" description="Disordered" evidence="3">
    <location>
        <begin position="342"/>
        <end position="400"/>
    </location>
</feature>
<feature type="compositionally biased region" description="Low complexity" evidence="3">
    <location>
        <begin position="346"/>
        <end position="358"/>
    </location>
</feature>
<feature type="compositionally biased region" description="Basic and acidic residues" evidence="3">
    <location>
        <begin position="378"/>
        <end position="388"/>
    </location>
</feature>
<feature type="compositionally biased region" description="Polar residues" evidence="3">
    <location>
        <begin position="390"/>
        <end position="400"/>
    </location>
</feature>
<feature type="binding site" evidence="1">
    <location>
        <position position="189"/>
    </location>
    <ligand>
        <name>substrate</name>
    </ligand>
</feature>
<feature type="binding site" evidence="2">
    <location>
        <position position="192"/>
    </location>
    <ligand>
        <name>Fe cation</name>
        <dbReference type="ChEBI" id="CHEBI:24875"/>
        <note>catalytic</note>
    </ligand>
</feature>
<feature type="binding site" evidence="2">
    <location>
        <position position="194"/>
    </location>
    <ligand>
        <name>Fe cation</name>
        <dbReference type="ChEBI" id="CHEBI:24875"/>
        <note>catalytic</note>
    </ligand>
</feature>
<feature type="binding site" evidence="1">
    <location>
        <position position="202"/>
    </location>
    <ligand>
        <name>2-oxoglutarate</name>
        <dbReference type="ChEBI" id="CHEBI:16810"/>
    </ligand>
</feature>
<feature type="binding site" evidence="1">
    <location>
        <position position="209"/>
    </location>
    <ligand>
        <name>substrate</name>
    </ligand>
</feature>
<feature type="binding site" evidence="2">
    <location>
        <position position="278"/>
    </location>
    <ligand>
        <name>Fe cation</name>
        <dbReference type="ChEBI" id="CHEBI:24875"/>
        <note>catalytic</note>
    </ligand>
</feature>
<feature type="binding site" evidence="1">
    <location>
        <position position="290"/>
    </location>
    <ligand>
        <name>2-oxoglutarate</name>
        <dbReference type="ChEBI" id="CHEBI:16810"/>
    </ligand>
</feature>
<comment type="function">
    <text evidence="1">Dioxygenase that can both act as a histone arginine demethylase and a lysyl-hydroxylase.</text>
</comment>
<comment type="cofactor">
    <cofactor evidence="1">
        <name>Fe(2+)</name>
        <dbReference type="ChEBI" id="CHEBI:29033"/>
    </cofactor>
    <text evidence="1">Binds 1 Fe(2+) ion per subunit.</text>
</comment>
<comment type="subunit">
    <text evidence="4">Interacts with ced-5 and ced-12.</text>
</comment>
<comment type="subcellular location">
    <subcellularLocation>
        <location evidence="1">Nucleus</location>
    </subcellularLocation>
</comment>
<comment type="miscellaneous">
    <text>Worms lacking psr-1 display more cell corpses than in wild-type animals.</text>
</comment>
<comment type="similarity">
    <text evidence="5">Belongs to the JMJD6 family.</text>
</comment>
<comment type="caution">
    <text evidence="5">Was initially thought to constitute the phosphatidylserine receptor, a receptor that mediates recognition of phosphatidylserine, a specific marker only present at the surface of apoptotic cells, and participates in apoptotic cell phagocytosis. However, some results strongly suggest that it does not constitute the receptor for phosphatidylserine and is not involved in apoptotic cell removal.</text>
</comment>
<protein>
    <recommendedName>
        <fullName>Bifunctional arginine demethylase and lysyl-hydroxylase psr-1</fullName>
        <ecNumber>1.14.11.-</ecNumber>
    </recommendedName>
    <alternativeName>
        <fullName>Phosphatidylserine receptor 1</fullName>
    </alternativeName>
</protein>
<name>JMJD6_CAEEL</name>
<accession>Q9GYI4</accession>
<reference key="1">
    <citation type="journal article" date="1998" name="Science">
        <title>Genome sequence of the nematode C. elegans: a platform for investigating biology.</title>
        <authorList>
            <consortium name="The C. elegans sequencing consortium"/>
        </authorList>
    </citation>
    <scope>NUCLEOTIDE SEQUENCE [LARGE SCALE GENOMIC DNA]</scope>
    <source>
        <strain>Bristol N2</strain>
    </source>
</reference>
<reference key="2">
    <citation type="journal article" date="2003" name="Science">
        <title>Cell corpse engulfment mediated by C. elegans phosphatidylserine receptor through CED-5 and CED-12.</title>
        <authorList>
            <person name="Wang X."/>
            <person name="Wu Y.-C."/>
            <person name="Fadok V.A."/>
            <person name="Lee M.-C."/>
            <person name="Gengyo-Ando K."/>
            <person name="Cheng L.-C."/>
            <person name="Ledwich D."/>
            <person name="Hsu P.-K."/>
            <person name="Chen J.-Y."/>
            <person name="Chou B.-K."/>
            <person name="Henson P."/>
            <person name="Mitani S."/>
            <person name="Xue D."/>
        </authorList>
    </citation>
    <scope>INTERACTION WITH CED-5 AND CED-12</scope>
</reference>
<organism>
    <name type="scientific">Caenorhabditis elegans</name>
    <dbReference type="NCBI Taxonomy" id="6239"/>
    <lineage>
        <taxon>Eukaryota</taxon>
        <taxon>Metazoa</taxon>
        <taxon>Ecdysozoa</taxon>
        <taxon>Nematoda</taxon>
        <taxon>Chromadorea</taxon>
        <taxon>Rhabditida</taxon>
        <taxon>Rhabditina</taxon>
        <taxon>Rhabditomorpha</taxon>
        <taxon>Rhabditoidea</taxon>
        <taxon>Rhabditidae</taxon>
        <taxon>Peloderinae</taxon>
        <taxon>Caenorhabditis</taxon>
    </lineage>
</organism>
<sequence length="400" mass="46618">MSLGRDRYSLPRTYKRVSHAKDKARPELRKFGWETLGYSESFNLPPFRDSIQRVDGNNLTVEEFRRDFERPRIPVIITGLTDNWAAKDKWTVERLSKKYRNQNFKCGEDDNGNSVRMKMKYYHDYMLNNKDDSPLYIFDSSFAERRKTKKLSEDYSVPKFFEDDLFHYADDKKRPPHRWFVMGPARSGTAIHIDPLGTSAWNSLLQGHKRWVLIPPIAPRDLVKPMAHEKGKHPDEGITWFQTVYKRVRSPSWPKEYAPIECRQGPGETMFVPSGWWHVVINEEYTIAVTHNYCSVENLHLVWPKTVKGRPKLSKHWVKRLTEQRPELLEIIKSASEIPLYDMNESSSDSSSSSSSSDDSSDESDCDDSGRCGGRKRKNDDRSNECPEKMSTTYFQNSLV</sequence>
<keyword id="KW-0156">Chromatin regulator</keyword>
<keyword id="KW-0223">Dioxygenase</keyword>
<keyword id="KW-0408">Iron</keyword>
<keyword id="KW-0479">Metal-binding</keyword>
<keyword id="KW-0539">Nucleus</keyword>
<keyword id="KW-0560">Oxidoreductase</keyword>
<keyword id="KW-1185">Reference proteome</keyword>
<keyword id="KW-0804">Transcription</keyword>
<keyword id="KW-0805">Transcription regulation</keyword>
<dbReference type="EC" id="1.14.11.-"/>
<dbReference type="EMBL" id="FO081255">
    <property type="protein sequence ID" value="CCD70226.1"/>
    <property type="molecule type" value="Genomic_DNA"/>
</dbReference>
<dbReference type="RefSeq" id="NP_001040940.1">
    <property type="nucleotide sequence ID" value="NM_001047475.3"/>
</dbReference>
<dbReference type="RefSeq" id="NP_001379906.1">
    <property type="nucleotide sequence ID" value="NM_001392301.1"/>
</dbReference>
<dbReference type="SMR" id="Q9GYI4"/>
<dbReference type="BioGRID" id="42358">
    <property type="interactions" value="11"/>
</dbReference>
<dbReference type="DIP" id="DIP-24340N"/>
<dbReference type="FunCoup" id="Q9GYI4">
    <property type="interactions" value="2221"/>
</dbReference>
<dbReference type="IntAct" id="Q9GYI4">
    <property type="interactions" value="1"/>
</dbReference>
<dbReference type="STRING" id="6239.F29B9.4c.1"/>
<dbReference type="PaxDb" id="6239-F29B9.4c"/>
<dbReference type="EnsemblMetazoa" id="F29B9.4a.1">
    <property type="protein sequence ID" value="F29B9.4a.1"/>
    <property type="gene ID" value="WBGene00004205"/>
</dbReference>
<dbReference type="EnsemblMetazoa" id="F29B9.4a.2">
    <property type="protein sequence ID" value="F29B9.4a.2"/>
    <property type="gene ID" value="WBGene00004205"/>
</dbReference>
<dbReference type="GeneID" id="177229"/>
<dbReference type="UCSC" id="F29B9.4a.1">
    <property type="organism name" value="c. elegans"/>
</dbReference>
<dbReference type="AGR" id="WB:WBGene00004205"/>
<dbReference type="WormBase" id="F29B9.4a">
    <property type="protein sequence ID" value="CE27146"/>
    <property type="gene ID" value="WBGene00004205"/>
    <property type="gene designation" value="psr-1"/>
</dbReference>
<dbReference type="eggNOG" id="KOG2130">
    <property type="taxonomic scope" value="Eukaryota"/>
</dbReference>
<dbReference type="HOGENOM" id="CLU_016785_8_0_1"/>
<dbReference type="InParanoid" id="Q9GYI4"/>
<dbReference type="PhylomeDB" id="Q9GYI4"/>
<dbReference type="Reactome" id="R-CEL-3214842">
    <property type="pathway name" value="HDMs demethylate histones"/>
</dbReference>
<dbReference type="Reactome" id="R-CEL-9629569">
    <property type="pathway name" value="Protein hydroxylation"/>
</dbReference>
<dbReference type="PRO" id="PR:Q9GYI4"/>
<dbReference type="Proteomes" id="UP000001940">
    <property type="component" value="Chromosome IV"/>
</dbReference>
<dbReference type="Bgee" id="WBGene00004205">
    <property type="expression patterns" value="Expressed in germ line (C elegans) and 4 other cell types or tissues"/>
</dbReference>
<dbReference type="ExpressionAtlas" id="Q9GYI4">
    <property type="expression patterns" value="baseline and differential"/>
</dbReference>
<dbReference type="GO" id="GO:0005737">
    <property type="term" value="C:cytoplasm"/>
    <property type="evidence" value="ECO:0000318"/>
    <property type="project" value="GO_Central"/>
</dbReference>
<dbReference type="GO" id="GO:0005634">
    <property type="term" value="C:nucleus"/>
    <property type="evidence" value="ECO:0000250"/>
    <property type="project" value="UniProtKB"/>
</dbReference>
<dbReference type="GO" id="GO:0005886">
    <property type="term" value="C:plasma membrane"/>
    <property type="evidence" value="ECO:0000314"/>
    <property type="project" value="WormBase"/>
</dbReference>
<dbReference type="GO" id="GO:0033749">
    <property type="term" value="F:histone H4R3 demethylase activity"/>
    <property type="evidence" value="ECO:0000318"/>
    <property type="project" value="GO_Central"/>
</dbReference>
<dbReference type="GO" id="GO:0042802">
    <property type="term" value="F:identical protein binding"/>
    <property type="evidence" value="ECO:0000314"/>
    <property type="project" value="WormBase"/>
</dbReference>
<dbReference type="GO" id="GO:0046872">
    <property type="term" value="F:metal ion binding"/>
    <property type="evidence" value="ECO:0007669"/>
    <property type="project" value="UniProtKB-KW"/>
</dbReference>
<dbReference type="GO" id="GO:0106140">
    <property type="term" value="F:P-TEFb complex binding"/>
    <property type="evidence" value="ECO:0000318"/>
    <property type="project" value="GO_Central"/>
</dbReference>
<dbReference type="GO" id="GO:0070815">
    <property type="term" value="F:peptidyl-lysine 5-dioxygenase activity"/>
    <property type="evidence" value="ECO:0000250"/>
    <property type="project" value="UniProtKB"/>
</dbReference>
<dbReference type="GO" id="GO:0001786">
    <property type="term" value="F:phosphatidylserine binding"/>
    <property type="evidence" value="ECO:0000314"/>
    <property type="project" value="WormBase"/>
</dbReference>
<dbReference type="GO" id="GO:0043652">
    <property type="term" value="P:engulfment of apoptotic cell"/>
    <property type="evidence" value="ECO:0000314"/>
    <property type="project" value="WormBase"/>
</dbReference>
<dbReference type="GO" id="GO:0018395">
    <property type="term" value="P:peptidyl-lysine hydroxylation to 5-hydroxy-L-lysine"/>
    <property type="evidence" value="ECO:0000250"/>
    <property type="project" value="UniProtKB"/>
</dbReference>
<dbReference type="GO" id="GO:0006909">
    <property type="term" value="P:phagocytosis"/>
    <property type="evidence" value="ECO:0000318"/>
    <property type="project" value="GO_Central"/>
</dbReference>
<dbReference type="Gene3D" id="1.20.1280.270">
    <property type="match status" value="1"/>
</dbReference>
<dbReference type="Gene3D" id="2.60.120.650">
    <property type="entry name" value="Cupin"/>
    <property type="match status" value="1"/>
</dbReference>
<dbReference type="InterPro" id="IPR003347">
    <property type="entry name" value="JmjC_dom"/>
</dbReference>
<dbReference type="InterPro" id="IPR050910">
    <property type="entry name" value="JMJD6_ArgDemeth/LysHydrox"/>
</dbReference>
<dbReference type="PANTHER" id="PTHR12480">
    <property type="entry name" value="ARGININE DEMETHYLASE AND LYSYL-HYDROXYLASE JMJD"/>
    <property type="match status" value="1"/>
</dbReference>
<dbReference type="PANTHER" id="PTHR12480:SF32">
    <property type="entry name" value="BIFUNCTIONAL ARGININE DEMETHYLASE AND LYSYL-HYDROXYLASE JMJD6"/>
    <property type="match status" value="1"/>
</dbReference>
<dbReference type="Pfam" id="PF02373">
    <property type="entry name" value="JmjC"/>
    <property type="match status" value="1"/>
</dbReference>
<dbReference type="SMART" id="SM00558">
    <property type="entry name" value="JmjC"/>
    <property type="match status" value="1"/>
</dbReference>
<dbReference type="SUPFAM" id="SSF51197">
    <property type="entry name" value="Clavaminate synthase-like"/>
    <property type="match status" value="1"/>
</dbReference>
<dbReference type="PROSITE" id="PS51184">
    <property type="entry name" value="JMJC"/>
    <property type="match status" value="1"/>
</dbReference>
<proteinExistence type="evidence at protein level"/>
<gene>
    <name type="primary">psr-1</name>
    <name type="ORF">F29B9.4</name>
</gene>
<evidence type="ECO:0000250" key="1"/>
<evidence type="ECO:0000255" key="2">
    <source>
        <dbReference type="PROSITE-ProRule" id="PRU00538"/>
    </source>
</evidence>
<evidence type="ECO:0000256" key="3">
    <source>
        <dbReference type="SAM" id="MobiDB-lite"/>
    </source>
</evidence>
<evidence type="ECO:0000269" key="4">
    <source>
    </source>
</evidence>
<evidence type="ECO:0000305" key="5"/>